<accession>A8W3E1</accession>
<gene>
    <name evidence="1" type="primary">psaJ</name>
</gene>
<evidence type="ECO:0000255" key="1">
    <source>
        <dbReference type="HAMAP-Rule" id="MF_00522"/>
    </source>
</evidence>
<evidence type="ECO:0000305" key="2"/>
<organism>
    <name type="scientific">Cuscuta exaltata</name>
    <name type="common">Tall dodder</name>
    <dbReference type="NCBI Taxonomy" id="476139"/>
    <lineage>
        <taxon>Eukaryota</taxon>
        <taxon>Viridiplantae</taxon>
        <taxon>Streptophyta</taxon>
        <taxon>Embryophyta</taxon>
        <taxon>Tracheophyta</taxon>
        <taxon>Spermatophyta</taxon>
        <taxon>Magnoliopsida</taxon>
        <taxon>eudicotyledons</taxon>
        <taxon>Gunneridae</taxon>
        <taxon>Pentapetalae</taxon>
        <taxon>asterids</taxon>
        <taxon>lamiids</taxon>
        <taxon>Solanales</taxon>
        <taxon>Convolvulaceae</taxon>
        <taxon>Cuscuteae</taxon>
        <taxon>Cuscuta</taxon>
        <taxon>Cuscuta subgen. Monogynella</taxon>
    </lineage>
</organism>
<keyword id="KW-0472">Membrane</keyword>
<keyword id="KW-0602">Photosynthesis</keyword>
<keyword id="KW-0603">Photosystem I</keyword>
<keyword id="KW-0934">Plastid</keyword>
<keyword id="KW-0812">Transmembrane</keyword>
<keyword id="KW-1133">Transmembrane helix</keyword>
<protein>
    <recommendedName>
        <fullName evidence="1">Photosystem I reaction center subunit IX</fullName>
    </recommendedName>
    <alternativeName>
        <fullName evidence="1">PSI-J</fullName>
    </alternativeName>
</protein>
<dbReference type="EMBL" id="EU189132">
    <property type="protein sequence ID" value="ABW83712.1"/>
    <property type="molecule type" value="Genomic_DNA"/>
</dbReference>
<dbReference type="RefSeq" id="YP_001542548.1">
    <property type="nucleotide sequence ID" value="NC_009963.1"/>
</dbReference>
<dbReference type="SMR" id="A8W3E1"/>
<dbReference type="GeneID" id="5729665"/>
<dbReference type="GO" id="GO:0009522">
    <property type="term" value="C:photosystem I"/>
    <property type="evidence" value="ECO:0007669"/>
    <property type="project" value="UniProtKB-KW"/>
</dbReference>
<dbReference type="GO" id="GO:0042170">
    <property type="term" value="C:plastid membrane"/>
    <property type="evidence" value="ECO:0007669"/>
    <property type="project" value="UniProtKB-SubCell"/>
</dbReference>
<dbReference type="GO" id="GO:0042651">
    <property type="term" value="C:thylakoid membrane"/>
    <property type="evidence" value="ECO:0007669"/>
    <property type="project" value="UniProtKB-UniRule"/>
</dbReference>
<dbReference type="GO" id="GO:0015979">
    <property type="term" value="P:photosynthesis"/>
    <property type="evidence" value="ECO:0007669"/>
    <property type="project" value="UniProtKB-UniRule"/>
</dbReference>
<dbReference type="Gene3D" id="1.20.5.510">
    <property type="entry name" value="Single helix bin"/>
    <property type="match status" value="1"/>
</dbReference>
<dbReference type="HAMAP" id="MF_00522">
    <property type="entry name" value="PSI_PsaJ"/>
    <property type="match status" value="1"/>
</dbReference>
<dbReference type="InterPro" id="IPR002615">
    <property type="entry name" value="PSI_PsaJ"/>
</dbReference>
<dbReference type="InterPro" id="IPR036062">
    <property type="entry name" value="PSI_PsaJ_sf"/>
</dbReference>
<dbReference type="PANTHER" id="PTHR36082">
    <property type="match status" value="1"/>
</dbReference>
<dbReference type="PANTHER" id="PTHR36082:SF2">
    <property type="entry name" value="PHOTOSYSTEM I REACTION CENTER SUBUNIT IX"/>
    <property type="match status" value="1"/>
</dbReference>
<dbReference type="Pfam" id="PF01701">
    <property type="entry name" value="PSI_PsaJ"/>
    <property type="match status" value="1"/>
</dbReference>
<dbReference type="SUPFAM" id="SSF81544">
    <property type="entry name" value="Subunit IX of photosystem I reaction centre, PsaJ"/>
    <property type="match status" value="1"/>
</dbReference>
<geneLocation type="plastid"/>
<sequence length="42" mass="4765">MRDFKTYLSAAPVLSTLWLGALAGLLIEINRFFPDALTFPFF</sequence>
<feature type="chain" id="PRO_0000354140" description="Photosystem I reaction center subunit IX">
    <location>
        <begin position="1"/>
        <end position="42"/>
    </location>
</feature>
<feature type="transmembrane region" description="Helical" evidence="1">
    <location>
        <begin position="7"/>
        <end position="27"/>
    </location>
</feature>
<name>PSAJ_CUSEX</name>
<proteinExistence type="inferred from homology"/>
<comment type="function">
    <text evidence="1">May help in the organization of the PsaE and PsaF subunits.</text>
</comment>
<comment type="subcellular location">
    <subcellularLocation>
        <location evidence="2">Plastid membrane</location>
        <topology evidence="1">Single-pass membrane protein</topology>
    </subcellularLocation>
</comment>
<comment type="similarity">
    <text evidence="1">Belongs to the PsaJ family.</text>
</comment>
<comment type="caution">
    <text evidence="2">Young tissue from this organism is photosynthetic and contains some thylakoids, although the photosynthetic activity does not exceed the light compensation point.</text>
</comment>
<reference key="1">
    <citation type="journal article" date="2007" name="BMC Plant Biol.">
        <title>Complete plastid genome sequences suggest strong selection for retention of photosynthetic genes in the parasitic plant genus Cuscuta.</title>
        <authorList>
            <person name="McNeal J.R."/>
            <person name="Kuehl J.V."/>
            <person name="Boore J.L."/>
            <person name="dePamphilis C.W."/>
        </authorList>
    </citation>
    <scope>NUCLEOTIDE SEQUENCE [LARGE SCALE GENOMIC DNA]</scope>
</reference>